<comment type="function">
    <text evidence="1">Part of the ABC transporter complex BtuCDF involved in vitamin B12 import. Binds vitamin B12 and delivers it to the periplasmic surface of BtuC.</text>
</comment>
<comment type="subunit">
    <text evidence="1">The complex is composed of two ATP-binding proteins (BtuD), two transmembrane proteins (BtuC) and a solute-binding protein (BtuF).</text>
</comment>
<comment type="subcellular location">
    <subcellularLocation>
        <location evidence="1">Periplasm</location>
    </subcellularLocation>
</comment>
<comment type="similarity">
    <text evidence="1">Belongs to the BtuF family.</text>
</comment>
<gene>
    <name evidence="1" type="primary">btuF</name>
    <name type="ordered locus">VC_2381</name>
</gene>
<protein>
    <recommendedName>
        <fullName evidence="1">Vitamin B12-binding protein</fullName>
    </recommendedName>
</protein>
<dbReference type="EMBL" id="AE003852">
    <property type="protein sequence ID" value="AAF95524.1"/>
    <property type="molecule type" value="Genomic_DNA"/>
</dbReference>
<dbReference type="PIR" id="C82084">
    <property type="entry name" value="C82084"/>
</dbReference>
<dbReference type="RefSeq" id="NP_232011.1">
    <property type="nucleotide sequence ID" value="NC_002505.1"/>
</dbReference>
<dbReference type="RefSeq" id="WP_000960255.1">
    <property type="nucleotide sequence ID" value="NZ_LT906614.1"/>
</dbReference>
<dbReference type="SMR" id="Q9KPI6"/>
<dbReference type="STRING" id="243277.VC_2381"/>
<dbReference type="DNASU" id="2613050"/>
<dbReference type="EnsemblBacteria" id="AAF95524">
    <property type="protein sequence ID" value="AAF95524"/>
    <property type="gene ID" value="VC_2381"/>
</dbReference>
<dbReference type="KEGG" id="vch:VC_2381"/>
<dbReference type="PATRIC" id="fig|243277.26.peg.2267"/>
<dbReference type="eggNOG" id="COG0614">
    <property type="taxonomic scope" value="Bacteria"/>
</dbReference>
<dbReference type="HOGENOM" id="CLU_038034_2_5_6"/>
<dbReference type="Proteomes" id="UP000000584">
    <property type="component" value="Chromosome 1"/>
</dbReference>
<dbReference type="GO" id="GO:0042597">
    <property type="term" value="C:periplasmic space"/>
    <property type="evidence" value="ECO:0007669"/>
    <property type="project" value="UniProtKB-SubCell"/>
</dbReference>
<dbReference type="GO" id="GO:0031419">
    <property type="term" value="F:cobalamin binding"/>
    <property type="evidence" value="ECO:0007669"/>
    <property type="project" value="InterPro"/>
</dbReference>
<dbReference type="GO" id="GO:0015889">
    <property type="term" value="P:cobalamin transport"/>
    <property type="evidence" value="ECO:0007669"/>
    <property type="project" value="UniProtKB-UniRule"/>
</dbReference>
<dbReference type="CDD" id="cd01144">
    <property type="entry name" value="BtuF"/>
    <property type="match status" value="1"/>
</dbReference>
<dbReference type="Gene3D" id="3.40.50.1980">
    <property type="entry name" value="Nitrogenase molybdenum iron protein domain"/>
    <property type="match status" value="2"/>
</dbReference>
<dbReference type="HAMAP" id="MF_01000">
    <property type="entry name" value="BtuF"/>
    <property type="match status" value="1"/>
</dbReference>
<dbReference type="InterPro" id="IPR002491">
    <property type="entry name" value="ABC_transptr_periplasmic_BD"/>
</dbReference>
<dbReference type="InterPro" id="IPR023544">
    <property type="entry name" value="ABC_transptr_vit_B12-bd"/>
</dbReference>
<dbReference type="InterPro" id="IPR054828">
    <property type="entry name" value="Vit_B12_bind_prot"/>
</dbReference>
<dbReference type="InterPro" id="IPR051030">
    <property type="entry name" value="Vitamin_B12-ABC_binding"/>
</dbReference>
<dbReference type="NCBIfam" id="NF002894">
    <property type="entry name" value="PRK03379.1"/>
    <property type="match status" value="1"/>
</dbReference>
<dbReference type="NCBIfam" id="NF038402">
    <property type="entry name" value="TroA_like"/>
    <property type="match status" value="1"/>
</dbReference>
<dbReference type="PANTHER" id="PTHR42860">
    <property type="entry name" value="VITAMIN B12-BINDING PROTEIN"/>
    <property type="match status" value="1"/>
</dbReference>
<dbReference type="PANTHER" id="PTHR42860:SF1">
    <property type="entry name" value="VITAMIN B12-BINDING PROTEIN"/>
    <property type="match status" value="1"/>
</dbReference>
<dbReference type="Pfam" id="PF01497">
    <property type="entry name" value="Peripla_BP_2"/>
    <property type="match status" value="1"/>
</dbReference>
<dbReference type="SUPFAM" id="SSF53807">
    <property type="entry name" value="Helical backbone' metal receptor"/>
    <property type="match status" value="1"/>
</dbReference>
<dbReference type="PROSITE" id="PS50983">
    <property type="entry name" value="FE_B12_PBP"/>
    <property type="match status" value="1"/>
</dbReference>
<reference key="1">
    <citation type="journal article" date="2000" name="Nature">
        <title>DNA sequence of both chromosomes of the cholera pathogen Vibrio cholerae.</title>
        <authorList>
            <person name="Heidelberg J.F."/>
            <person name="Eisen J.A."/>
            <person name="Nelson W.C."/>
            <person name="Clayton R.A."/>
            <person name="Gwinn M.L."/>
            <person name="Dodson R.J."/>
            <person name="Haft D.H."/>
            <person name="Hickey E.K."/>
            <person name="Peterson J.D."/>
            <person name="Umayam L.A."/>
            <person name="Gill S.R."/>
            <person name="Nelson K.E."/>
            <person name="Read T.D."/>
            <person name="Tettelin H."/>
            <person name="Richardson D.L."/>
            <person name="Ermolaeva M.D."/>
            <person name="Vamathevan J.J."/>
            <person name="Bass S."/>
            <person name="Qin H."/>
            <person name="Dragoi I."/>
            <person name="Sellers P."/>
            <person name="McDonald L.A."/>
            <person name="Utterback T.R."/>
            <person name="Fleischmann R.D."/>
            <person name="Nierman W.C."/>
            <person name="White O."/>
            <person name="Salzberg S.L."/>
            <person name="Smith H.O."/>
            <person name="Colwell R.R."/>
            <person name="Mekalanos J.J."/>
            <person name="Venter J.C."/>
            <person name="Fraser C.M."/>
        </authorList>
    </citation>
    <scope>NUCLEOTIDE SEQUENCE [LARGE SCALE GENOMIC DNA]</scope>
    <source>
        <strain>ATCC 39315 / El Tor Inaba N16961</strain>
    </source>
</reference>
<proteinExistence type="inferred from homology"/>
<feature type="signal peptide" evidence="1">
    <location>
        <begin position="1"/>
        <end position="20"/>
    </location>
</feature>
<feature type="chain" id="PRO_0000003508" description="Vitamin B12-binding protein">
    <location>
        <begin position="21"/>
        <end position="276"/>
    </location>
</feature>
<feature type="domain" description="Fe/B12 periplasmic-binding" evidence="1">
    <location>
        <begin position="27"/>
        <end position="274"/>
    </location>
</feature>
<feature type="binding site" evidence="1">
    <location>
        <position position="54"/>
    </location>
    <ligand>
        <name>cyanocob(III)alamin</name>
        <dbReference type="ChEBI" id="CHEBI:17439"/>
    </ligand>
</feature>
<feature type="site" description="Important for BtuC binding" evidence="1">
    <location>
        <position position="76"/>
    </location>
</feature>
<feature type="site" description="Important for BtuC binding" evidence="1">
    <location>
        <position position="206"/>
    </location>
</feature>
<feature type="disulfide bond" evidence="1">
    <location>
        <begin position="187"/>
        <end position="267"/>
    </location>
</feature>
<evidence type="ECO:0000255" key="1">
    <source>
        <dbReference type="HAMAP-Rule" id="MF_01000"/>
    </source>
</evidence>
<accession>Q9KPI6</accession>
<organism>
    <name type="scientific">Vibrio cholerae serotype O1 (strain ATCC 39315 / El Tor Inaba N16961)</name>
    <dbReference type="NCBI Taxonomy" id="243277"/>
    <lineage>
        <taxon>Bacteria</taxon>
        <taxon>Pseudomonadati</taxon>
        <taxon>Pseudomonadota</taxon>
        <taxon>Gammaproteobacteria</taxon>
        <taxon>Vibrionales</taxon>
        <taxon>Vibrionaceae</taxon>
        <taxon>Vibrio</taxon>
    </lineage>
</organism>
<sequence>MLVIRLIACTFLFITPSLLAKPFPAERIISLAPHATEIAYAAGLGDKLVAVSEYSDYPPQALELERVANHQTINIEKILTLKPDLIIAWPAGNPPRELAKLRQLGFTIYDSQTKTLDEIADNIEALSHYSANPEVGQKAAHDFRQRLQDLRTQYASNQPIRYFYQLSEKPIITLAQGHWPSEVFSLCGGVNIFADSEVPYPQVSIEQVLVKQPQVIFTSEHAIANGHMWRAWQAELSAVQNDQVWALNADWLNRPTPRTLDAVEQVCTYLKIAQKQ</sequence>
<name>BTUF_VIBCH</name>
<keyword id="KW-1015">Disulfide bond</keyword>
<keyword id="KW-0574">Periplasm</keyword>
<keyword id="KW-1185">Reference proteome</keyword>
<keyword id="KW-0732">Signal</keyword>
<keyword id="KW-0813">Transport</keyword>